<accession>Q923Q2</accession>
<accession>E9PUB5</accession>
<accession>Q8K369</accession>
<feature type="chain" id="PRO_0000220680" description="StAR-related lipid transfer protein 13">
    <location>
        <begin position="1"/>
        <end position="1113"/>
    </location>
</feature>
<feature type="domain" description="SAM">
    <location>
        <begin position="55"/>
        <end position="122"/>
    </location>
</feature>
<feature type="domain" description="Rho-GAP" evidence="3">
    <location>
        <begin position="663"/>
        <end position="868"/>
    </location>
</feature>
<feature type="domain" description="START" evidence="4">
    <location>
        <begin position="899"/>
        <end position="1109"/>
    </location>
</feature>
<feature type="region of interest" description="Disordered" evidence="5">
    <location>
        <begin position="164"/>
        <end position="218"/>
    </location>
</feature>
<feature type="region of interest" description="Disordered" evidence="5">
    <location>
        <begin position="230"/>
        <end position="256"/>
    </location>
</feature>
<feature type="region of interest" description="Disordered" evidence="5">
    <location>
        <begin position="308"/>
        <end position="343"/>
    </location>
</feature>
<feature type="region of interest" description="Disordered" evidence="5">
    <location>
        <begin position="421"/>
        <end position="443"/>
    </location>
</feature>
<feature type="region of interest" description="Disordered" evidence="5">
    <location>
        <begin position="514"/>
        <end position="578"/>
    </location>
</feature>
<feature type="compositionally biased region" description="Polar residues" evidence="5">
    <location>
        <begin position="179"/>
        <end position="188"/>
    </location>
</feature>
<feature type="compositionally biased region" description="Low complexity" evidence="5">
    <location>
        <begin position="197"/>
        <end position="214"/>
    </location>
</feature>
<feature type="compositionally biased region" description="Polar residues" evidence="5">
    <location>
        <begin position="230"/>
        <end position="245"/>
    </location>
</feature>
<feature type="compositionally biased region" description="Low complexity" evidence="5">
    <location>
        <begin position="322"/>
        <end position="340"/>
    </location>
</feature>
<feature type="compositionally biased region" description="Polar residues" evidence="5">
    <location>
        <begin position="421"/>
        <end position="435"/>
    </location>
</feature>
<feature type="compositionally biased region" description="Polar residues" evidence="5">
    <location>
        <begin position="529"/>
        <end position="549"/>
    </location>
</feature>
<feature type="site" description="Arginine finger; crucial for GTP hydrolysis by stabilizing the transition state" evidence="3">
    <location>
        <position position="699"/>
    </location>
</feature>
<feature type="modified residue" description="N-acetylmethionine" evidence="2">
    <location>
        <position position="1"/>
    </location>
</feature>
<feature type="modified residue" description="Phosphoserine" evidence="7">
    <location>
        <position position="411"/>
    </location>
</feature>
<feature type="sequence conflict" description="In Ref. 2; AAH27830." evidence="6" ref="2">
    <original>M</original>
    <variation>V</variation>
    <location>
        <position position="384"/>
    </location>
</feature>
<feature type="sequence conflict" description="In Ref. 2; AAH27830." evidence="6" ref="2">
    <original>A</original>
    <variation>V</variation>
    <location>
        <position position="785"/>
    </location>
</feature>
<organism>
    <name type="scientific">Mus musculus</name>
    <name type="common">Mouse</name>
    <dbReference type="NCBI Taxonomy" id="10090"/>
    <lineage>
        <taxon>Eukaryota</taxon>
        <taxon>Metazoa</taxon>
        <taxon>Chordata</taxon>
        <taxon>Craniata</taxon>
        <taxon>Vertebrata</taxon>
        <taxon>Euteleostomi</taxon>
        <taxon>Mammalia</taxon>
        <taxon>Eutheria</taxon>
        <taxon>Euarchontoglires</taxon>
        <taxon>Glires</taxon>
        <taxon>Rodentia</taxon>
        <taxon>Myomorpha</taxon>
        <taxon>Muroidea</taxon>
        <taxon>Muridae</taxon>
        <taxon>Murinae</taxon>
        <taxon>Mus</taxon>
        <taxon>Mus</taxon>
    </lineage>
</organism>
<gene>
    <name type="primary">Stard13</name>
</gene>
<name>STA13_MOUSE</name>
<sequence>MFSQVPRTPAAGCYYLNPLTPESQEMYLRFDQTARRSPYRMSRILARHHLVTKIQQEIEAKEACDWLRAAGFPQYAQLYEDSQFPINIAAVKKDHDFLERDLVEPLCRRLNTLNKCASMRLDVNFQRKKGDDSDEEDLCISNKWTFQRTSRRWSRVDDLHTLFPVADRNGSPGGPRMRNTASSESVLTDLSEPEVCSIHSESSGGSDSRSQSGHHSADSTHALEATLVSSSLPQSTREGLNQSFHPKNEKPTRTRAKSFLKRMDTLRVKGALGRHKGPGRTGGLVISRPVLQQEPESFKTMQCVQIPNGDLQTSPPAACRKGLPCSSKSSGESSPLENSSTVSTPCMKERKCHHEANKRGGMYLEDLDVLAGTALPDTSDQNHMHGFHSQENLVVHIPKDHKPGTFPKALSIESLSPTDNSNGVNWRTGSISLGRQQGPGMREPRLMSSCHRASRVSIYDNVPSSHLYASTGDLLDLEKDGLLPQLDDILQHVNGIQEVVDDWSKNILPELQSHSTLAGDPGLSPFPSPNQVTLDFEGNSVSEGRTTPSDVERDRTSLNESEATGVRERRDSGVGASLTRPNRRLRWSSFQLSHQPQPSPATPHISSQTAAQLNLLQRFSLLRLTAIMEKYSMSNKHGWTWSVPKFMKRIKAPDYRDKAVFGVPLIVHVQRTGQPLPQSIQQALRYLRSNCLDQVGLFRKSGVKSRIHALRQMNENFPDNVSYEDQSAYDVADMVKQFFRDLPEPLFTNKLSETFLHIYQYVPKEQRLQAVQAAILLLADENREALQTLLCFLHDVVNLVDENQMTPMNLAVCLAPSLFHLNLLKKESSPKVIQKKYATGKPDQKDLNENLAAAQGLAHMITECNRLFEVPHEMVAQSRDSYLEAEIHVPSLEDLGAQLAESGATFHTYLEHLVQGLQKEAKEKFKGWVTCSSPDNTDLAFKKVGDGHPLKLWKASVEVEAPPSVVLNRVLRERHLWDEDFVQWKVVERLDKQTEIYQYVLNSMVPHPSRDFLVLRTWKTDLPKGMCTLVSLSVEYEEAQLMGGVRAVVMDSQYLIEPCGSGKSRLTHICRIDLKGHSPEWYSKGFGHLCAAEVTRIRNSFQPLVAEGPETKI</sequence>
<dbReference type="EMBL" id="AC109614">
    <property type="status" value="NOT_ANNOTATED_CDS"/>
    <property type="molecule type" value="Genomic_DNA"/>
</dbReference>
<dbReference type="EMBL" id="AC163219">
    <property type="status" value="NOT_ANNOTATED_CDS"/>
    <property type="molecule type" value="Genomic_DNA"/>
</dbReference>
<dbReference type="EMBL" id="BC027830">
    <property type="protein sequence ID" value="AAH27830.2"/>
    <property type="molecule type" value="mRNA"/>
</dbReference>
<dbReference type="CCDS" id="CCDS19890.1"/>
<dbReference type="RefSeq" id="NP_666370.3">
    <property type="nucleotide sequence ID" value="NM_146258.2"/>
</dbReference>
<dbReference type="BMRB" id="Q923Q2"/>
<dbReference type="SMR" id="Q923Q2"/>
<dbReference type="BioGRID" id="232505">
    <property type="interactions" value="38"/>
</dbReference>
<dbReference type="FunCoup" id="Q923Q2">
    <property type="interactions" value="738"/>
</dbReference>
<dbReference type="IntAct" id="Q923Q2">
    <property type="interactions" value="10"/>
</dbReference>
<dbReference type="STRING" id="10090.ENSMUSP00000053232"/>
<dbReference type="GlyGen" id="Q923Q2">
    <property type="glycosylation" value="1 site, 1 N-linked glycan (1 site)"/>
</dbReference>
<dbReference type="iPTMnet" id="Q923Q2"/>
<dbReference type="PhosphoSitePlus" id="Q923Q2"/>
<dbReference type="jPOST" id="Q923Q2"/>
<dbReference type="PaxDb" id="10090-ENSMUSP00000053232"/>
<dbReference type="ProteomicsDB" id="258651"/>
<dbReference type="Pumba" id="Q923Q2"/>
<dbReference type="Antibodypedia" id="35333">
    <property type="antibodies" value="111 antibodies from 25 providers"/>
</dbReference>
<dbReference type="DNASU" id="243362"/>
<dbReference type="Ensembl" id="ENSMUST00000110483.9">
    <property type="protein sequence ID" value="ENSMUSP00000106109.3"/>
    <property type="gene ID" value="ENSMUSG00000016128.15"/>
</dbReference>
<dbReference type="GeneID" id="243362"/>
<dbReference type="KEGG" id="mmu:243362"/>
<dbReference type="UCSC" id="uc009aum.2">
    <property type="organism name" value="mouse"/>
</dbReference>
<dbReference type="AGR" id="MGI:2385331"/>
<dbReference type="CTD" id="90627"/>
<dbReference type="MGI" id="MGI:2385331">
    <property type="gene designation" value="Stard13"/>
</dbReference>
<dbReference type="VEuPathDB" id="HostDB:ENSMUSG00000016128"/>
<dbReference type="eggNOG" id="KOG2200">
    <property type="taxonomic scope" value="Eukaryota"/>
</dbReference>
<dbReference type="GeneTree" id="ENSGT00950000183061"/>
<dbReference type="HOGENOM" id="CLU_004367_0_0_1"/>
<dbReference type="InParanoid" id="Q923Q2"/>
<dbReference type="OrthoDB" id="10003330at2759"/>
<dbReference type="PhylomeDB" id="Q923Q2"/>
<dbReference type="Reactome" id="R-MMU-8980692">
    <property type="pathway name" value="RHOA GTPase cycle"/>
</dbReference>
<dbReference type="Reactome" id="R-MMU-9013026">
    <property type="pathway name" value="RHOB GTPase cycle"/>
</dbReference>
<dbReference type="Reactome" id="R-MMU-9013106">
    <property type="pathway name" value="RHOC GTPase cycle"/>
</dbReference>
<dbReference type="Reactome" id="R-MMU-9013148">
    <property type="pathway name" value="CDC42 GTPase cycle"/>
</dbReference>
<dbReference type="BioGRID-ORCS" id="243362">
    <property type="hits" value="1 hit in 80 CRISPR screens"/>
</dbReference>
<dbReference type="ChiTaRS" id="Stard13">
    <property type="organism name" value="mouse"/>
</dbReference>
<dbReference type="PRO" id="PR:Q923Q2"/>
<dbReference type="Proteomes" id="UP000000589">
    <property type="component" value="Chromosome 5"/>
</dbReference>
<dbReference type="RNAct" id="Q923Q2">
    <property type="molecule type" value="protein"/>
</dbReference>
<dbReference type="Bgee" id="ENSMUSG00000016128">
    <property type="expression patterns" value="Expressed in animal zygote and 202 other cell types or tissues"/>
</dbReference>
<dbReference type="ExpressionAtlas" id="Q923Q2">
    <property type="expression patterns" value="baseline and differential"/>
</dbReference>
<dbReference type="GO" id="GO:0005811">
    <property type="term" value="C:lipid droplet"/>
    <property type="evidence" value="ECO:0007669"/>
    <property type="project" value="UniProtKB-SubCell"/>
</dbReference>
<dbReference type="GO" id="GO:0031966">
    <property type="term" value="C:mitochondrial membrane"/>
    <property type="evidence" value="ECO:0007669"/>
    <property type="project" value="UniProtKB-SubCell"/>
</dbReference>
<dbReference type="GO" id="GO:0005096">
    <property type="term" value="F:GTPase activator activity"/>
    <property type="evidence" value="ECO:0007669"/>
    <property type="project" value="UniProtKB-KW"/>
</dbReference>
<dbReference type="GO" id="GO:0008289">
    <property type="term" value="F:lipid binding"/>
    <property type="evidence" value="ECO:0007669"/>
    <property type="project" value="InterPro"/>
</dbReference>
<dbReference type="GO" id="GO:0043542">
    <property type="term" value="P:endothelial cell migration"/>
    <property type="evidence" value="ECO:0000266"/>
    <property type="project" value="MGI"/>
</dbReference>
<dbReference type="GO" id="GO:0097498">
    <property type="term" value="P:endothelial tube lumen extension"/>
    <property type="evidence" value="ECO:0000266"/>
    <property type="project" value="MGI"/>
</dbReference>
<dbReference type="GO" id="GO:0090051">
    <property type="term" value="P:negative regulation of cell migration involved in sprouting angiogenesis"/>
    <property type="evidence" value="ECO:0000266"/>
    <property type="project" value="MGI"/>
</dbReference>
<dbReference type="GO" id="GO:1903671">
    <property type="term" value="P:negative regulation of sprouting angiogenesis"/>
    <property type="evidence" value="ECO:0000315"/>
    <property type="project" value="MGI"/>
</dbReference>
<dbReference type="GO" id="GO:0007165">
    <property type="term" value="P:signal transduction"/>
    <property type="evidence" value="ECO:0007669"/>
    <property type="project" value="InterPro"/>
</dbReference>
<dbReference type="CDD" id="cd04375">
    <property type="entry name" value="RhoGAP_DLC1"/>
    <property type="match status" value="1"/>
</dbReference>
<dbReference type="CDD" id="cd09592">
    <property type="entry name" value="SAM_DLC2"/>
    <property type="match status" value="1"/>
</dbReference>
<dbReference type="FunFam" id="1.10.555.10:FF:000007">
    <property type="entry name" value="rho GTPase-activating protein 7 isoform X2"/>
    <property type="match status" value="1"/>
</dbReference>
<dbReference type="FunFam" id="3.30.530.20:FF:000009">
    <property type="entry name" value="StAR related lipid transfer domain containing 13"/>
    <property type="match status" value="1"/>
</dbReference>
<dbReference type="FunFam" id="1.10.287.2070:FF:000001">
    <property type="entry name" value="StAR-related lipid transfer domain-containing 13"/>
    <property type="match status" value="1"/>
</dbReference>
<dbReference type="Gene3D" id="1.10.287.2070">
    <property type="match status" value="1"/>
</dbReference>
<dbReference type="Gene3D" id="3.30.530.20">
    <property type="match status" value="1"/>
</dbReference>
<dbReference type="Gene3D" id="6.10.250.1870">
    <property type="match status" value="1"/>
</dbReference>
<dbReference type="Gene3D" id="1.10.555.10">
    <property type="entry name" value="Rho GTPase activation protein"/>
    <property type="match status" value="1"/>
</dbReference>
<dbReference type="InterPro" id="IPR008936">
    <property type="entry name" value="Rho_GTPase_activation_prot"/>
</dbReference>
<dbReference type="InterPro" id="IPR000198">
    <property type="entry name" value="RhoGAP_dom"/>
</dbReference>
<dbReference type="InterPro" id="IPR001660">
    <property type="entry name" value="SAM"/>
</dbReference>
<dbReference type="InterPro" id="IPR013761">
    <property type="entry name" value="SAM/pointed_sf"/>
</dbReference>
<dbReference type="InterPro" id="IPR023393">
    <property type="entry name" value="START-like_dom_sf"/>
</dbReference>
<dbReference type="InterPro" id="IPR002913">
    <property type="entry name" value="START_lipid-bd_dom"/>
</dbReference>
<dbReference type="PANTHER" id="PTHR12659">
    <property type="entry name" value="RHO-TYPE GTPASE ACTIVATING PROTEIN"/>
    <property type="match status" value="1"/>
</dbReference>
<dbReference type="PANTHER" id="PTHR12659:SF6">
    <property type="entry name" value="STAR-RELATED LIPID TRANSFER PROTEIN 13"/>
    <property type="match status" value="1"/>
</dbReference>
<dbReference type="Pfam" id="PF00620">
    <property type="entry name" value="RhoGAP"/>
    <property type="match status" value="1"/>
</dbReference>
<dbReference type="Pfam" id="PF07647">
    <property type="entry name" value="SAM_2"/>
    <property type="match status" value="1"/>
</dbReference>
<dbReference type="Pfam" id="PF01852">
    <property type="entry name" value="START"/>
    <property type="match status" value="1"/>
</dbReference>
<dbReference type="SMART" id="SM00324">
    <property type="entry name" value="RhoGAP"/>
    <property type="match status" value="1"/>
</dbReference>
<dbReference type="SMART" id="SM00234">
    <property type="entry name" value="START"/>
    <property type="match status" value="1"/>
</dbReference>
<dbReference type="SUPFAM" id="SSF55961">
    <property type="entry name" value="Bet v1-like"/>
    <property type="match status" value="1"/>
</dbReference>
<dbReference type="SUPFAM" id="SSF48350">
    <property type="entry name" value="GTPase activation domain, GAP"/>
    <property type="match status" value="1"/>
</dbReference>
<dbReference type="SUPFAM" id="SSF47769">
    <property type="entry name" value="SAM/Pointed domain"/>
    <property type="match status" value="1"/>
</dbReference>
<dbReference type="PROSITE" id="PS50238">
    <property type="entry name" value="RHOGAP"/>
    <property type="match status" value="1"/>
</dbReference>
<dbReference type="PROSITE" id="PS50848">
    <property type="entry name" value="START"/>
    <property type="match status" value="1"/>
</dbReference>
<proteinExistence type="evidence at protein level"/>
<keyword id="KW-0007">Acetylation</keyword>
<keyword id="KW-0131">Cell cycle</keyword>
<keyword id="KW-0963">Cytoplasm</keyword>
<keyword id="KW-0343">GTPase activation</keyword>
<keyword id="KW-0551">Lipid droplet</keyword>
<keyword id="KW-0472">Membrane</keyword>
<keyword id="KW-0496">Mitochondrion</keyword>
<keyword id="KW-0597">Phosphoprotein</keyword>
<keyword id="KW-1185">Reference proteome</keyword>
<reference key="1">
    <citation type="journal article" date="2009" name="PLoS Biol.">
        <title>Lineage-specific biology revealed by a finished genome assembly of the mouse.</title>
        <authorList>
            <person name="Church D.M."/>
            <person name="Goodstadt L."/>
            <person name="Hillier L.W."/>
            <person name="Zody M.C."/>
            <person name="Goldstein S."/>
            <person name="She X."/>
            <person name="Bult C.J."/>
            <person name="Agarwala R."/>
            <person name="Cherry J.L."/>
            <person name="DiCuccio M."/>
            <person name="Hlavina W."/>
            <person name="Kapustin Y."/>
            <person name="Meric P."/>
            <person name="Maglott D."/>
            <person name="Birtle Z."/>
            <person name="Marques A.C."/>
            <person name="Graves T."/>
            <person name="Zhou S."/>
            <person name="Teague B."/>
            <person name="Potamousis K."/>
            <person name="Churas C."/>
            <person name="Place M."/>
            <person name="Herschleb J."/>
            <person name="Runnheim R."/>
            <person name="Forrest D."/>
            <person name="Amos-Landgraf J."/>
            <person name="Schwartz D.C."/>
            <person name="Cheng Z."/>
            <person name="Lindblad-Toh K."/>
            <person name="Eichler E.E."/>
            <person name="Ponting C.P."/>
        </authorList>
    </citation>
    <scope>NUCLEOTIDE SEQUENCE [LARGE SCALE GENOMIC DNA]</scope>
    <source>
        <strain>C57BL/6J</strain>
    </source>
</reference>
<reference key="2">
    <citation type="journal article" date="2004" name="Genome Res.">
        <title>The status, quality, and expansion of the NIH full-length cDNA project: the Mammalian Gene Collection (MGC).</title>
        <authorList>
            <consortium name="The MGC Project Team"/>
        </authorList>
    </citation>
    <scope>NUCLEOTIDE SEQUENCE [LARGE SCALE MRNA]</scope>
    <source>
        <strain>FVB/N</strain>
        <tissue>Mammary tumor</tissue>
    </source>
</reference>
<reference key="3">
    <citation type="journal article" date="2010" name="Cell">
        <title>A tissue-specific atlas of mouse protein phosphorylation and expression.</title>
        <authorList>
            <person name="Huttlin E.L."/>
            <person name="Jedrychowski M.P."/>
            <person name="Elias J.E."/>
            <person name="Goswami T."/>
            <person name="Rad R."/>
            <person name="Beausoleil S.A."/>
            <person name="Villen J."/>
            <person name="Haas W."/>
            <person name="Sowa M.E."/>
            <person name="Gygi S.P."/>
        </authorList>
    </citation>
    <scope>PHOSPHORYLATION [LARGE SCALE ANALYSIS] AT SER-411</scope>
    <scope>IDENTIFICATION BY MASS SPECTROMETRY [LARGE SCALE ANALYSIS]</scope>
    <source>
        <tissue>Brown adipose tissue</tissue>
        <tissue>Kidney</tissue>
        <tissue>Liver</tissue>
        <tissue>Lung</tissue>
        <tissue>Pancreas</tissue>
    </source>
</reference>
<evidence type="ECO:0000250" key="1"/>
<evidence type="ECO:0000250" key="2">
    <source>
        <dbReference type="UniProtKB" id="Q9Y3M8"/>
    </source>
</evidence>
<evidence type="ECO:0000255" key="3">
    <source>
        <dbReference type="PROSITE-ProRule" id="PRU00172"/>
    </source>
</evidence>
<evidence type="ECO:0000255" key="4">
    <source>
        <dbReference type="PROSITE-ProRule" id="PRU00197"/>
    </source>
</evidence>
<evidence type="ECO:0000256" key="5">
    <source>
        <dbReference type="SAM" id="MobiDB-lite"/>
    </source>
</evidence>
<evidence type="ECO:0000305" key="6"/>
<evidence type="ECO:0007744" key="7">
    <source>
    </source>
</evidence>
<comment type="function">
    <text>May function as a GTPase-activating protein.</text>
</comment>
<comment type="subunit">
    <text evidence="1">Homodimer. Interacts with TAX1BP1 (By similarity).</text>
</comment>
<comment type="interaction">
    <interactant intactId="EBI-8393503">
        <id>Q923Q2</id>
    </interactant>
    <interactant intactId="EBI-2608428">
        <id>Q96QB1</id>
        <label>DLC1</label>
    </interactant>
    <organismsDiffer>true</organismsDiffer>
    <experiments>2</experiments>
</comment>
<comment type="subcellular location">
    <subcellularLocation>
        <location>Cytoplasm</location>
    </subcellularLocation>
    <subcellularLocation>
        <location>Membrane</location>
        <topology>Peripheral membrane protein</topology>
        <orientation>Cytoplasmic side</orientation>
    </subcellularLocation>
    <subcellularLocation>
        <location>Mitochondrion membrane</location>
        <topology>Peripheral membrane protein</topology>
        <orientation>Cytoplasmic side</orientation>
    </subcellularLocation>
    <subcellularLocation>
        <location evidence="1">Lipid droplet</location>
    </subcellularLocation>
</comment>
<protein>
    <recommendedName>
        <fullName>StAR-related lipid transfer protein 13</fullName>
    </recommendedName>
    <alternativeName>
        <fullName>START domain-containing protein 13</fullName>
        <shortName>StARD13</shortName>
    </alternativeName>
</protein>